<reference key="1">
    <citation type="submission" date="2006-08" db="EMBL/GenBank/DDBJ databases">
        <authorList>
            <consortium name="NIH - Mammalian Gene Collection (MGC) project"/>
        </authorList>
    </citation>
    <scope>NUCLEOTIDE SEQUENCE [LARGE SCALE MRNA]</scope>
    <source>
        <strain>Hereford</strain>
        <tissue>Fetal skin</tissue>
    </source>
</reference>
<proteinExistence type="evidence at transcript level"/>
<dbReference type="EMBL" id="BC119909">
    <property type="protein sequence ID" value="AAI19910.1"/>
    <property type="molecule type" value="mRNA"/>
</dbReference>
<dbReference type="RefSeq" id="NP_001069085.1">
    <property type="nucleotide sequence ID" value="NM_001075617.1"/>
</dbReference>
<dbReference type="RefSeq" id="XP_010800080.1">
    <property type="nucleotide sequence ID" value="XM_010801778.2"/>
</dbReference>
<dbReference type="RefSeq" id="XP_059749157.1">
    <property type="nucleotide sequence ID" value="XM_059893174.1"/>
</dbReference>
<dbReference type="SMR" id="Q0VD01"/>
<dbReference type="FunCoup" id="Q0VD01">
    <property type="interactions" value="3843"/>
</dbReference>
<dbReference type="STRING" id="9913.ENSBTAP00000004184"/>
<dbReference type="PaxDb" id="9913-ENSBTAP00000004184"/>
<dbReference type="GeneID" id="513405"/>
<dbReference type="KEGG" id="bta:513405"/>
<dbReference type="CTD" id="92856"/>
<dbReference type="VEuPathDB" id="HostDB:ENSBTAG00000003225"/>
<dbReference type="eggNOG" id="KOG2781">
    <property type="taxonomic scope" value="Eukaryota"/>
</dbReference>
<dbReference type="HOGENOM" id="CLU_040063_2_0_1"/>
<dbReference type="InParanoid" id="Q0VD01"/>
<dbReference type="OMA" id="IGTMSEQ"/>
<dbReference type="OrthoDB" id="10253204at2759"/>
<dbReference type="TreeFam" id="TF300016"/>
<dbReference type="Reactome" id="R-BTA-6791226">
    <property type="pathway name" value="Major pathway of rRNA processing in the nucleolus and cytosol"/>
</dbReference>
<dbReference type="CD-CODE" id="D7FE2080">
    <property type="entry name" value="Nucleolus"/>
</dbReference>
<dbReference type="Proteomes" id="UP000009136">
    <property type="component" value="Chromosome 2"/>
</dbReference>
<dbReference type="Bgee" id="ENSBTAG00000003225">
    <property type="expression patterns" value="Expressed in metanephros cortex and 105 other cell types or tissues"/>
</dbReference>
<dbReference type="GO" id="GO:0034457">
    <property type="term" value="C:Mpp10 complex"/>
    <property type="evidence" value="ECO:0000318"/>
    <property type="project" value="GO_Central"/>
</dbReference>
<dbReference type="GO" id="GO:0005730">
    <property type="term" value="C:nucleolus"/>
    <property type="evidence" value="ECO:0000318"/>
    <property type="project" value="GO_Central"/>
</dbReference>
<dbReference type="GO" id="GO:0032040">
    <property type="term" value="C:small-subunit processome"/>
    <property type="evidence" value="ECO:0000250"/>
    <property type="project" value="UniProtKB"/>
</dbReference>
<dbReference type="GO" id="GO:0042134">
    <property type="term" value="F:rRNA primary transcript binding"/>
    <property type="evidence" value="ECO:0007669"/>
    <property type="project" value="InterPro"/>
</dbReference>
<dbReference type="GO" id="GO:0030515">
    <property type="term" value="F:snoRNA binding"/>
    <property type="evidence" value="ECO:0000318"/>
    <property type="project" value="GO_Central"/>
</dbReference>
<dbReference type="GO" id="GO:0042274">
    <property type="term" value="P:ribosomal small subunit biogenesis"/>
    <property type="evidence" value="ECO:0000250"/>
    <property type="project" value="UniProtKB"/>
</dbReference>
<dbReference type="GO" id="GO:0006364">
    <property type="term" value="P:rRNA processing"/>
    <property type="evidence" value="ECO:0000318"/>
    <property type="project" value="GO_Central"/>
</dbReference>
<dbReference type="FunFam" id="3.40.50.10480:FF:000001">
    <property type="entry name" value="IMP4, U3 small nucleolar ribonucleoprotein"/>
    <property type="match status" value="1"/>
</dbReference>
<dbReference type="Gene3D" id="3.40.50.10480">
    <property type="entry name" value="Probable brix-domain ribosomal biogenesis protein"/>
    <property type="match status" value="1"/>
</dbReference>
<dbReference type="InterPro" id="IPR007109">
    <property type="entry name" value="Brix"/>
</dbReference>
<dbReference type="InterPro" id="IPR044281">
    <property type="entry name" value="IMP4/RPF1"/>
</dbReference>
<dbReference type="PANTHER" id="PTHR22734">
    <property type="entry name" value="U3 SMALL NUCLEOLAR RIBONUCLEOPROTEIN PROTEIN IMP4"/>
    <property type="match status" value="1"/>
</dbReference>
<dbReference type="PANTHER" id="PTHR22734:SF2">
    <property type="entry name" value="U3 SMALL NUCLEOLAR RIBONUCLEOPROTEIN PROTEIN IMP4"/>
    <property type="match status" value="1"/>
</dbReference>
<dbReference type="Pfam" id="PF04427">
    <property type="entry name" value="Brix"/>
    <property type="match status" value="1"/>
</dbReference>
<dbReference type="SMART" id="SM00879">
    <property type="entry name" value="Brix"/>
    <property type="match status" value="1"/>
</dbReference>
<dbReference type="SUPFAM" id="SSF52954">
    <property type="entry name" value="Class II aaRS ABD-related"/>
    <property type="match status" value="1"/>
</dbReference>
<dbReference type="PROSITE" id="PS50833">
    <property type="entry name" value="BRIX"/>
    <property type="match status" value="1"/>
</dbReference>
<gene>
    <name type="primary">IMP4</name>
</gene>
<protein>
    <recommendedName>
        <fullName>U3 small nucleolar ribonucleoprotein protein IMP4</fullName>
        <shortName>U3 snoRNP protein IMP4</shortName>
    </recommendedName>
</protein>
<sequence length="291" mass="33681">MLRREARLRREYLYRKAREEAERTAQERKDKVRRALEENRLIPTELRREALALQGSLEFDDAGGEGVTNHVDDEYRWAGVEDPKVMITTSRDPSSRLKMFAKELKLVFPGAQRMNRGRHEVGALVRACKANGVTDLLVVHEHRGTPVGLIVSHLPFGPTAYFTLCNVVMRHDIPDLGTASEAKPHLIMHGFSSRLGKRVSDILRYLFPVPKDDSRRVITFANQDDYISFRHHVYKKTNHRNVELTEVGPRFELKLYMIRLGTLEQEATADVEWRWHPYTNTAHKRVFLSAE</sequence>
<feature type="chain" id="PRO_0000269725" description="U3 small nucleolar ribonucleoprotein protein IMP4">
    <location>
        <begin position="1"/>
        <end position="291"/>
    </location>
</feature>
<feature type="domain" description="Brix" evidence="2">
    <location>
        <begin position="83"/>
        <end position="264"/>
    </location>
</feature>
<keyword id="KW-0539">Nucleus</keyword>
<keyword id="KW-1185">Reference proteome</keyword>
<keyword id="KW-0687">Ribonucleoprotein</keyword>
<keyword id="KW-0690">Ribosome biogenesis</keyword>
<keyword id="KW-0698">rRNA processing</keyword>
<accession>Q0VD01</accession>
<evidence type="ECO:0000250" key="1">
    <source>
        <dbReference type="UniProtKB" id="Q96G21"/>
    </source>
</evidence>
<evidence type="ECO:0000255" key="2">
    <source>
        <dbReference type="PROSITE-ProRule" id="PRU00034"/>
    </source>
</evidence>
<comment type="function">
    <text evidence="1">Component of the 60-80S U3 small nucleolar ribonucleoprotein (U3 snoRNP). Required for the early cleavages during pre-18S ribosomal RNA processing. Part of the small subunit (SSU) processome, first precursor of the small eukaryotic ribosomal subunit. During the assembly of the SSU processome in the nucleolus, many ribosome biogenesis factors, an RNA chaperone and ribosomal proteins associate with the nascent pre-rRNA and work in concert to generate RNA folding, modifications, rearrangements and cleavage as well as targeted degradation of pre-ribosomal RNA by the RNA exosome.</text>
</comment>
<comment type="subunit">
    <text evidence="1">Part of the small subunit (SSU) processome, composed of more than 70 proteins and the RNA chaperone small nucleolar RNA (snoRNA) U3. Component of a heterotrimeric complex containing IMP3, IMP4 and MPHOSPH10. Interacts with MPHOSPH10.</text>
</comment>
<comment type="subcellular location">
    <subcellularLocation>
        <location evidence="1">Nucleus</location>
        <location evidence="1">Nucleolus</location>
    </subcellularLocation>
</comment>
<organism>
    <name type="scientific">Bos taurus</name>
    <name type="common">Bovine</name>
    <dbReference type="NCBI Taxonomy" id="9913"/>
    <lineage>
        <taxon>Eukaryota</taxon>
        <taxon>Metazoa</taxon>
        <taxon>Chordata</taxon>
        <taxon>Craniata</taxon>
        <taxon>Vertebrata</taxon>
        <taxon>Euteleostomi</taxon>
        <taxon>Mammalia</taxon>
        <taxon>Eutheria</taxon>
        <taxon>Laurasiatheria</taxon>
        <taxon>Artiodactyla</taxon>
        <taxon>Ruminantia</taxon>
        <taxon>Pecora</taxon>
        <taxon>Bovidae</taxon>
        <taxon>Bovinae</taxon>
        <taxon>Bos</taxon>
    </lineage>
</organism>
<name>IMP4_BOVIN</name>